<sequence length="469" mass="53543">MSNIYIQEPPTNGKVLLKTTAGDIDIELWSKEAPKACRNFIQLCLEAYYDNTIFHRVVPGFIVQGGDPTGTGTGGESIYGAPFKDEFHSRLRFNRRGLVAMANAGPHDNGSQFFFTLGRADELNNKHTIFGKVTGDTVYNMLRLTEVDIDDEERPRNPHRIKSCEVLFNPFDDITPREIKKPKNEKPEEEVKKLKPKGTKNFSLLSFGEEAEEEEEEVNRVSQSMKGRSKSSHDLLKDDPHLSSVPAVESEKDDATGDLEDDGEDDSAERDEYMEDDEKNLMRERIAKRLKKDASASVKSAGDGEKKPASRSEELRKEARQLKRELLAAKQKKETAIKVEEGREEEEAAPDGAVAEYRREKQKYEALRKQQPKKGTSREDQTLALLSQFKSKLTQAITETPENSVPEAEVEDDEGWMSHVLQFEDKTRKVKDASMQDSDTFEIYDPRNPVNKRRREESKKLLREKKERR</sequence>
<comment type="function">
    <text evidence="1">As part of the spliceosome, plays a role in pre-mRNA splicing. Probable inactive PPIase with no peptidyl-prolyl cis-trans isomerase activity. As a component of the minor spliceosome, involved in the splicing of U12-type introns in pre-mRNAs (By similarity).</text>
</comment>
<comment type="subunit">
    <text evidence="1">Part of the activated spliceosome B/catalytic step 1 spliceosome, one of the forms of the spliceosome which has a well-formed active site but still cannot catalyze the branching reaction and is composed at least of 52 proteins, the U2, U5 and U6 snRNAs and the pre-mRNA. Recruited during early steps of activated spliceosome B maturation, it is probably one of the first proteins released from this complex as he matures to the spliceosome C complex. Component of the minor spliceosome, which splices U12-type introns (By similarity).</text>
</comment>
<comment type="subcellular location">
    <subcellularLocation>
        <location evidence="1">Nucleus</location>
    </subcellularLocation>
</comment>
<comment type="disruption phenotype">
    <text evidence="5">Knockout mice manifest significant embryonic lethality. Growth retardation, lack of neural tube closure, and absence of limb buds are observed at embryonic day 12.5. Surviving mice show growth retardation and retinal dystrophic changes.</text>
</comment>
<comment type="similarity">
    <text evidence="6">Belongs to the cyclophilin-type PPIase family.</text>
</comment>
<comment type="caution">
    <text evidence="1">Despite the fact that it belongs to the cyclophilin-type PPIase family, it has probably no peptidyl-prolyl cis-trans isomerase activity.</text>
</comment>
<comment type="sequence caution" evidence="6">
    <conflict type="erroneous initiation">
        <sequence resource="EMBL-CDS" id="AAH25437"/>
    </conflict>
</comment>
<comment type="sequence caution" evidence="6">
    <conflict type="frameshift">
        <sequence resource="EMBL-CDS" id="BAB29120"/>
    </conflict>
</comment>
<comment type="sequence caution" evidence="6">
    <conflict type="erroneous initiation">
        <sequence resource="EMBL-CDS" id="BAC36042"/>
    </conflict>
</comment>
<comment type="sequence caution" evidence="6">
    <conflict type="erroneous initiation">
        <sequence resource="EMBL-CDS" id="BAC37003"/>
    </conflict>
</comment>
<name>CWC27_MOUSE</name>
<evidence type="ECO:0000250" key="1">
    <source>
        <dbReference type="UniProtKB" id="Q6UX04"/>
    </source>
</evidence>
<evidence type="ECO:0000255" key="2"/>
<evidence type="ECO:0000255" key="3">
    <source>
        <dbReference type="PROSITE-ProRule" id="PRU00156"/>
    </source>
</evidence>
<evidence type="ECO:0000256" key="4">
    <source>
        <dbReference type="SAM" id="MobiDB-lite"/>
    </source>
</evidence>
<evidence type="ECO:0000269" key="5">
    <source>
    </source>
</evidence>
<evidence type="ECO:0000305" key="6"/>
<evidence type="ECO:0000312" key="7">
    <source>
        <dbReference type="MGI" id="MGI:1914535"/>
    </source>
</evidence>
<protein>
    <recommendedName>
        <fullName evidence="6">Spliceosome-associated protein CWC27 homolog</fullName>
    </recommendedName>
    <alternativeName>
        <fullName evidence="1">Probable inactive peptidyl-prolyl cis-trans isomerase CWC27 homolog</fullName>
        <shortName evidence="1">PPIase CWC27</shortName>
    </alternativeName>
</protein>
<proteinExistence type="evidence at protein level"/>
<feature type="initiator methionine" description="Removed" evidence="1">
    <location>
        <position position="1"/>
    </location>
</feature>
<feature type="chain" id="PRO_0000313649" description="Spliceosome-associated protein CWC27 homolog">
    <location>
        <begin position="2"/>
        <end position="469"/>
    </location>
</feature>
<feature type="domain" description="PPIase cyclophilin-type" evidence="3">
    <location>
        <begin position="11"/>
        <end position="166"/>
    </location>
</feature>
<feature type="region of interest" description="Disordered" evidence="4">
    <location>
        <begin position="175"/>
        <end position="415"/>
    </location>
</feature>
<feature type="region of interest" description="Disordered" evidence="4">
    <location>
        <begin position="428"/>
        <end position="469"/>
    </location>
</feature>
<feature type="coiled-coil region" evidence="2">
    <location>
        <begin position="206"/>
        <end position="229"/>
    </location>
</feature>
<feature type="coiled-coil region" evidence="2">
    <location>
        <begin position="309"/>
        <end position="371"/>
    </location>
</feature>
<feature type="compositionally biased region" description="Basic and acidic residues" evidence="4">
    <location>
        <begin position="175"/>
        <end position="193"/>
    </location>
</feature>
<feature type="compositionally biased region" description="Basic and acidic residues" evidence="4">
    <location>
        <begin position="231"/>
        <end position="241"/>
    </location>
</feature>
<feature type="compositionally biased region" description="Acidic residues" evidence="4">
    <location>
        <begin position="256"/>
        <end position="278"/>
    </location>
</feature>
<feature type="compositionally biased region" description="Basic and acidic residues" evidence="4">
    <location>
        <begin position="302"/>
        <end position="341"/>
    </location>
</feature>
<feature type="compositionally biased region" description="Basic and acidic residues" evidence="4">
    <location>
        <begin position="356"/>
        <end position="368"/>
    </location>
</feature>
<feature type="compositionally biased region" description="Polar residues" evidence="4">
    <location>
        <begin position="384"/>
        <end position="403"/>
    </location>
</feature>
<feature type="compositionally biased region" description="Basic and acidic residues" evidence="4">
    <location>
        <begin position="454"/>
        <end position="469"/>
    </location>
</feature>
<feature type="modified residue" description="N-acetylserine" evidence="1">
    <location>
        <position position="2"/>
    </location>
</feature>
<feature type="sequence conflict" description="In Ref. 1; BAB29120." evidence="6" ref="1">
    <original>D</original>
    <variation>DLLQ</variation>
    <location>
        <position position="261"/>
    </location>
</feature>
<feature type="sequence conflict" description="In Ref. 2; AAH25437." evidence="6" ref="2">
    <original>I</original>
    <variation>T</variation>
    <location>
        <position position="337"/>
    </location>
</feature>
<accession>Q3TKY6</accession>
<accession>Q8BG42</accession>
<accession>Q8R158</accession>
<accession>Q9CXT1</accession>
<organism>
    <name type="scientific">Mus musculus</name>
    <name type="common">Mouse</name>
    <dbReference type="NCBI Taxonomy" id="10090"/>
    <lineage>
        <taxon>Eukaryota</taxon>
        <taxon>Metazoa</taxon>
        <taxon>Chordata</taxon>
        <taxon>Craniata</taxon>
        <taxon>Vertebrata</taxon>
        <taxon>Euteleostomi</taxon>
        <taxon>Mammalia</taxon>
        <taxon>Eutheria</taxon>
        <taxon>Euarchontoglires</taxon>
        <taxon>Glires</taxon>
        <taxon>Rodentia</taxon>
        <taxon>Myomorpha</taxon>
        <taxon>Muroidea</taxon>
        <taxon>Muridae</taxon>
        <taxon>Murinae</taxon>
        <taxon>Mus</taxon>
        <taxon>Mus</taxon>
    </lineage>
</organism>
<dbReference type="EMBL" id="AK014025">
    <property type="protein sequence ID" value="BAB29120.1"/>
    <property type="status" value="ALT_FRAME"/>
    <property type="molecule type" value="mRNA"/>
</dbReference>
<dbReference type="EMBL" id="AK075902">
    <property type="protein sequence ID" value="BAC36042.1"/>
    <property type="status" value="ALT_INIT"/>
    <property type="molecule type" value="mRNA"/>
</dbReference>
<dbReference type="EMBL" id="AK077779">
    <property type="protein sequence ID" value="BAC37003.1"/>
    <property type="status" value="ALT_INIT"/>
    <property type="molecule type" value="mRNA"/>
</dbReference>
<dbReference type="EMBL" id="AK166770">
    <property type="protein sequence ID" value="BAE39007.1"/>
    <property type="molecule type" value="mRNA"/>
</dbReference>
<dbReference type="EMBL" id="BC025437">
    <property type="protein sequence ID" value="AAH25437.1"/>
    <property type="status" value="ALT_INIT"/>
    <property type="molecule type" value="mRNA"/>
</dbReference>
<dbReference type="CCDS" id="CCDS26752.1"/>
<dbReference type="RefSeq" id="NP_080348.1">
    <property type="nucleotide sequence ID" value="NM_026072.1"/>
</dbReference>
<dbReference type="SMR" id="Q3TKY6"/>
<dbReference type="BioGRID" id="212073">
    <property type="interactions" value="38"/>
</dbReference>
<dbReference type="FunCoup" id="Q3TKY6">
    <property type="interactions" value="2715"/>
</dbReference>
<dbReference type="IntAct" id="Q3TKY6">
    <property type="interactions" value="1"/>
</dbReference>
<dbReference type="MINT" id="Q3TKY6"/>
<dbReference type="STRING" id="10090.ENSMUSP00000022228"/>
<dbReference type="GlyGen" id="Q3TKY6">
    <property type="glycosylation" value="1 site, 1 N-linked glycan (1 site)"/>
</dbReference>
<dbReference type="iPTMnet" id="Q3TKY6"/>
<dbReference type="PhosphoSitePlus" id="Q3TKY6"/>
<dbReference type="PaxDb" id="10090-ENSMUSP00000022228"/>
<dbReference type="PeptideAtlas" id="Q3TKY6"/>
<dbReference type="ProteomicsDB" id="279238"/>
<dbReference type="Pumba" id="Q3TKY6"/>
<dbReference type="Antibodypedia" id="11511">
    <property type="antibodies" value="162 antibodies from 21 providers"/>
</dbReference>
<dbReference type="Ensembl" id="ENSMUST00000022228.13">
    <property type="protein sequence ID" value="ENSMUSP00000022228.7"/>
    <property type="gene ID" value="ENSMUSG00000021715.13"/>
</dbReference>
<dbReference type="GeneID" id="67285"/>
<dbReference type="KEGG" id="mmu:67285"/>
<dbReference type="UCSC" id="uc007rtj.1">
    <property type="organism name" value="mouse"/>
</dbReference>
<dbReference type="AGR" id="MGI:1914535"/>
<dbReference type="CTD" id="10283"/>
<dbReference type="MGI" id="MGI:1914535">
    <property type="gene designation" value="Cwc27"/>
</dbReference>
<dbReference type="VEuPathDB" id="HostDB:ENSMUSG00000021715"/>
<dbReference type="eggNOG" id="KOG0865">
    <property type="taxonomic scope" value="Eukaryota"/>
</dbReference>
<dbReference type="eggNOG" id="KOG0885">
    <property type="taxonomic scope" value="Eukaryota"/>
</dbReference>
<dbReference type="GeneTree" id="ENSGT00940000155967"/>
<dbReference type="HOGENOM" id="CLU_012062_14_4_1"/>
<dbReference type="InParanoid" id="Q3TKY6"/>
<dbReference type="OMA" id="DDWYDVY"/>
<dbReference type="OrthoDB" id="442970at2759"/>
<dbReference type="PhylomeDB" id="Q3TKY6"/>
<dbReference type="TreeFam" id="TF105935"/>
<dbReference type="Reactome" id="R-MMU-72163">
    <property type="pathway name" value="mRNA Splicing - Major Pathway"/>
</dbReference>
<dbReference type="BioGRID-ORCS" id="67285">
    <property type="hits" value="9 hits in 79 CRISPR screens"/>
</dbReference>
<dbReference type="ChiTaRS" id="Cwc27">
    <property type="organism name" value="mouse"/>
</dbReference>
<dbReference type="PRO" id="PR:Q3TKY6"/>
<dbReference type="Proteomes" id="UP000000589">
    <property type="component" value="Chromosome 13"/>
</dbReference>
<dbReference type="RNAct" id="Q3TKY6">
    <property type="molecule type" value="protein"/>
</dbReference>
<dbReference type="Bgee" id="ENSMUSG00000021715">
    <property type="expression patterns" value="Expressed in embryonic post-anal tail and 237 other cell types or tissues"/>
</dbReference>
<dbReference type="ExpressionAtlas" id="Q3TKY6">
    <property type="expression patterns" value="baseline and differential"/>
</dbReference>
<dbReference type="GO" id="GO:0071013">
    <property type="term" value="C:catalytic step 2 spliceosome"/>
    <property type="evidence" value="ECO:0007669"/>
    <property type="project" value="Ensembl"/>
</dbReference>
<dbReference type="GO" id="GO:0005654">
    <property type="term" value="C:nucleoplasm"/>
    <property type="evidence" value="ECO:0007669"/>
    <property type="project" value="Ensembl"/>
</dbReference>
<dbReference type="GO" id="GO:0005634">
    <property type="term" value="C:nucleus"/>
    <property type="evidence" value="ECO:0000314"/>
    <property type="project" value="MGI"/>
</dbReference>
<dbReference type="GO" id="GO:0071005">
    <property type="term" value="C:U2-type precatalytic spliceosome"/>
    <property type="evidence" value="ECO:0000250"/>
    <property type="project" value="UniProtKB"/>
</dbReference>
<dbReference type="GO" id="GO:0003755">
    <property type="term" value="F:peptidyl-prolyl cis-trans isomerase activity"/>
    <property type="evidence" value="ECO:0007669"/>
    <property type="project" value="InterPro"/>
</dbReference>
<dbReference type="GO" id="GO:0006457">
    <property type="term" value="P:protein folding"/>
    <property type="evidence" value="ECO:0007669"/>
    <property type="project" value="InterPro"/>
</dbReference>
<dbReference type="CDD" id="cd22288">
    <property type="entry name" value="CWC27_CTD"/>
    <property type="match status" value="1"/>
</dbReference>
<dbReference type="CDD" id="cd01925">
    <property type="entry name" value="cyclophilin_CeCYP16-like"/>
    <property type="match status" value="1"/>
</dbReference>
<dbReference type="FunFam" id="2.40.100.10:FF:000007">
    <property type="entry name" value="Peptidyl-prolyl cis-trans isomerase CWC27 homolog"/>
    <property type="match status" value="1"/>
</dbReference>
<dbReference type="Gene3D" id="2.40.100.10">
    <property type="entry name" value="Cyclophilin-like"/>
    <property type="match status" value="1"/>
</dbReference>
<dbReference type="InterPro" id="IPR029000">
    <property type="entry name" value="Cyclophilin-like_dom_sf"/>
</dbReference>
<dbReference type="InterPro" id="IPR020892">
    <property type="entry name" value="Cyclophilin-type_PPIase_CS"/>
</dbReference>
<dbReference type="InterPro" id="IPR002130">
    <property type="entry name" value="Cyclophilin-type_PPIase_dom"/>
</dbReference>
<dbReference type="InterPro" id="IPR044666">
    <property type="entry name" value="Cyclophilin_A-like"/>
</dbReference>
<dbReference type="PANTHER" id="PTHR45625">
    <property type="entry name" value="PEPTIDYL-PROLYL CIS-TRANS ISOMERASE-RELATED"/>
    <property type="match status" value="1"/>
</dbReference>
<dbReference type="PANTHER" id="PTHR45625:SF6">
    <property type="entry name" value="SPLICEOSOME-ASSOCIATED PROTEIN CWC27 HOMOLOG"/>
    <property type="match status" value="1"/>
</dbReference>
<dbReference type="Pfam" id="PF00160">
    <property type="entry name" value="Pro_isomerase"/>
    <property type="match status" value="1"/>
</dbReference>
<dbReference type="PRINTS" id="PR00153">
    <property type="entry name" value="CSAPPISMRASE"/>
</dbReference>
<dbReference type="SUPFAM" id="SSF50891">
    <property type="entry name" value="Cyclophilin-like"/>
    <property type="match status" value="1"/>
</dbReference>
<dbReference type="PROSITE" id="PS00170">
    <property type="entry name" value="CSA_PPIASE_1"/>
    <property type="match status" value="1"/>
</dbReference>
<dbReference type="PROSITE" id="PS50072">
    <property type="entry name" value="CSA_PPIASE_2"/>
    <property type="match status" value="1"/>
</dbReference>
<reference key="1">
    <citation type="journal article" date="2005" name="Science">
        <title>The transcriptional landscape of the mammalian genome.</title>
        <authorList>
            <person name="Carninci P."/>
            <person name="Kasukawa T."/>
            <person name="Katayama S."/>
            <person name="Gough J."/>
            <person name="Frith M.C."/>
            <person name="Maeda N."/>
            <person name="Oyama R."/>
            <person name="Ravasi T."/>
            <person name="Lenhard B."/>
            <person name="Wells C."/>
            <person name="Kodzius R."/>
            <person name="Shimokawa K."/>
            <person name="Bajic V.B."/>
            <person name="Brenner S.E."/>
            <person name="Batalov S."/>
            <person name="Forrest A.R."/>
            <person name="Zavolan M."/>
            <person name="Davis M.J."/>
            <person name="Wilming L.G."/>
            <person name="Aidinis V."/>
            <person name="Allen J.E."/>
            <person name="Ambesi-Impiombato A."/>
            <person name="Apweiler R."/>
            <person name="Aturaliya R.N."/>
            <person name="Bailey T.L."/>
            <person name="Bansal M."/>
            <person name="Baxter L."/>
            <person name="Beisel K.W."/>
            <person name="Bersano T."/>
            <person name="Bono H."/>
            <person name="Chalk A.M."/>
            <person name="Chiu K.P."/>
            <person name="Choudhary V."/>
            <person name="Christoffels A."/>
            <person name="Clutterbuck D.R."/>
            <person name="Crowe M.L."/>
            <person name="Dalla E."/>
            <person name="Dalrymple B.P."/>
            <person name="de Bono B."/>
            <person name="Della Gatta G."/>
            <person name="di Bernardo D."/>
            <person name="Down T."/>
            <person name="Engstrom P."/>
            <person name="Fagiolini M."/>
            <person name="Faulkner G."/>
            <person name="Fletcher C.F."/>
            <person name="Fukushima T."/>
            <person name="Furuno M."/>
            <person name="Futaki S."/>
            <person name="Gariboldi M."/>
            <person name="Georgii-Hemming P."/>
            <person name="Gingeras T.R."/>
            <person name="Gojobori T."/>
            <person name="Green R.E."/>
            <person name="Gustincich S."/>
            <person name="Harbers M."/>
            <person name="Hayashi Y."/>
            <person name="Hensch T.K."/>
            <person name="Hirokawa N."/>
            <person name="Hill D."/>
            <person name="Huminiecki L."/>
            <person name="Iacono M."/>
            <person name="Ikeo K."/>
            <person name="Iwama A."/>
            <person name="Ishikawa T."/>
            <person name="Jakt M."/>
            <person name="Kanapin A."/>
            <person name="Katoh M."/>
            <person name="Kawasawa Y."/>
            <person name="Kelso J."/>
            <person name="Kitamura H."/>
            <person name="Kitano H."/>
            <person name="Kollias G."/>
            <person name="Krishnan S.P."/>
            <person name="Kruger A."/>
            <person name="Kummerfeld S.K."/>
            <person name="Kurochkin I.V."/>
            <person name="Lareau L.F."/>
            <person name="Lazarevic D."/>
            <person name="Lipovich L."/>
            <person name="Liu J."/>
            <person name="Liuni S."/>
            <person name="McWilliam S."/>
            <person name="Madan Babu M."/>
            <person name="Madera M."/>
            <person name="Marchionni L."/>
            <person name="Matsuda H."/>
            <person name="Matsuzawa S."/>
            <person name="Miki H."/>
            <person name="Mignone F."/>
            <person name="Miyake S."/>
            <person name="Morris K."/>
            <person name="Mottagui-Tabar S."/>
            <person name="Mulder N."/>
            <person name="Nakano N."/>
            <person name="Nakauchi H."/>
            <person name="Ng P."/>
            <person name="Nilsson R."/>
            <person name="Nishiguchi S."/>
            <person name="Nishikawa S."/>
            <person name="Nori F."/>
            <person name="Ohara O."/>
            <person name="Okazaki Y."/>
            <person name="Orlando V."/>
            <person name="Pang K.C."/>
            <person name="Pavan W.J."/>
            <person name="Pavesi G."/>
            <person name="Pesole G."/>
            <person name="Petrovsky N."/>
            <person name="Piazza S."/>
            <person name="Reed J."/>
            <person name="Reid J.F."/>
            <person name="Ring B.Z."/>
            <person name="Ringwald M."/>
            <person name="Rost B."/>
            <person name="Ruan Y."/>
            <person name="Salzberg S.L."/>
            <person name="Sandelin A."/>
            <person name="Schneider C."/>
            <person name="Schoenbach C."/>
            <person name="Sekiguchi K."/>
            <person name="Semple C.A."/>
            <person name="Seno S."/>
            <person name="Sessa L."/>
            <person name="Sheng Y."/>
            <person name="Shibata Y."/>
            <person name="Shimada H."/>
            <person name="Shimada K."/>
            <person name="Silva D."/>
            <person name="Sinclair B."/>
            <person name="Sperling S."/>
            <person name="Stupka E."/>
            <person name="Sugiura K."/>
            <person name="Sultana R."/>
            <person name="Takenaka Y."/>
            <person name="Taki K."/>
            <person name="Tammoja K."/>
            <person name="Tan S.L."/>
            <person name="Tang S."/>
            <person name="Taylor M.S."/>
            <person name="Tegner J."/>
            <person name="Teichmann S.A."/>
            <person name="Ueda H.R."/>
            <person name="van Nimwegen E."/>
            <person name="Verardo R."/>
            <person name="Wei C.L."/>
            <person name="Yagi K."/>
            <person name="Yamanishi H."/>
            <person name="Zabarovsky E."/>
            <person name="Zhu S."/>
            <person name="Zimmer A."/>
            <person name="Hide W."/>
            <person name="Bult C."/>
            <person name="Grimmond S.M."/>
            <person name="Teasdale R.D."/>
            <person name="Liu E.T."/>
            <person name="Brusic V."/>
            <person name="Quackenbush J."/>
            <person name="Wahlestedt C."/>
            <person name="Mattick J.S."/>
            <person name="Hume D.A."/>
            <person name="Kai C."/>
            <person name="Sasaki D."/>
            <person name="Tomaru Y."/>
            <person name="Fukuda S."/>
            <person name="Kanamori-Katayama M."/>
            <person name="Suzuki M."/>
            <person name="Aoki J."/>
            <person name="Arakawa T."/>
            <person name="Iida J."/>
            <person name="Imamura K."/>
            <person name="Itoh M."/>
            <person name="Kato T."/>
            <person name="Kawaji H."/>
            <person name="Kawagashira N."/>
            <person name="Kawashima T."/>
            <person name="Kojima M."/>
            <person name="Kondo S."/>
            <person name="Konno H."/>
            <person name="Nakano K."/>
            <person name="Ninomiya N."/>
            <person name="Nishio T."/>
            <person name="Okada M."/>
            <person name="Plessy C."/>
            <person name="Shibata K."/>
            <person name="Shiraki T."/>
            <person name="Suzuki S."/>
            <person name="Tagami M."/>
            <person name="Waki K."/>
            <person name="Watahiki A."/>
            <person name="Okamura-Oho Y."/>
            <person name="Suzuki H."/>
            <person name="Kawai J."/>
            <person name="Hayashizaki Y."/>
        </authorList>
    </citation>
    <scope>NUCLEOTIDE SEQUENCE [LARGE SCALE MRNA]</scope>
    <source>
        <strain>C57BL/6J</strain>
        <tissue>Head</tissue>
        <tissue>Thymus</tissue>
        <tissue>Tongue</tissue>
    </source>
</reference>
<reference key="2">
    <citation type="journal article" date="2004" name="Genome Res.">
        <title>The status, quality, and expansion of the NIH full-length cDNA project: the Mammalian Gene Collection (MGC).</title>
        <authorList>
            <consortium name="The MGC Project Team"/>
        </authorList>
    </citation>
    <scope>NUCLEOTIDE SEQUENCE [LARGE SCALE MRNA] OF 101-469</scope>
    <source>
        <strain>FVB/N</strain>
        <tissue>Mammary tumor</tissue>
    </source>
</reference>
<reference key="3">
    <citation type="journal article" date="2010" name="Cell">
        <title>A tissue-specific atlas of mouse protein phosphorylation and expression.</title>
        <authorList>
            <person name="Huttlin E.L."/>
            <person name="Jedrychowski M.P."/>
            <person name="Elias J.E."/>
            <person name="Goswami T."/>
            <person name="Rad R."/>
            <person name="Beausoleil S.A."/>
            <person name="Villen J."/>
            <person name="Haas W."/>
            <person name="Sowa M.E."/>
            <person name="Gygi S.P."/>
        </authorList>
    </citation>
    <scope>IDENTIFICATION BY MASS SPECTROMETRY [LARGE SCALE ANALYSIS]</scope>
    <source>
        <tissue>Brain</tissue>
    </source>
</reference>
<reference key="4">
    <citation type="journal article" date="2017" name="Am. J. Hum. Genet.">
        <title>Mutations in the spliceosome component CWC27 cause retinal degeneration with or without additional developmental anomalies.</title>
        <authorList>
            <consortium name="UK Inherited Retinal Dystrophy Consortium"/>
            <person name="Xu M."/>
            <person name="Xie Y.A."/>
            <person name="Abouzeid H."/>
            <person name="Gordon C.T."/>
            <person name="Fiorentino A."/>
            <person name="Sun Z."/>
            <person name="Lehman A."/>
            <person name="Osman I.S."/>
            <person name="Dharmat R."/>
            <person name="Riveiro-Alvarez R."/>
            <person name="Bapst-Wicht L."/>
            <person name="Babino D."/>
            <person name="Arno G."/>
            <person name="Busetto V."/>
            <person name="Zhao L."/>
            <person name="Li H."/>
            <person name="Lopez-Martinez M.A."/>
            <person name="Azevedo L.F."/>
            <person name="Hubert L."/>
            <person name="Pontikos N."/>
            <person name="Eblimit A."/>
            <person name="Lorda-Sanchez I."/>
            <person name="Kheir V."/>
            <person name="Plagnol V."/>
            <person name="Oufadem M."/>
            <person name="Soens Z.T."/>
            <person name="Yang L."/>
            <person name="Bole-Feysot C."/>
            <person name="Pfundt R."/>
            <person name="Allaman-Pillet N."/>
            <person name="Nitschke P."/>
            <person name="Cheetham M.E."/>
            <person name="Lyonnet S."/>
            <person name="Agrawal S.A."/>
            <person name="Li H."/>
            <person name="Pinton G."/>
            <person name="Michaelides M."/>
            <person name="Besmond C."/>
            <person name="Li Y."/>
            <person name="Yuan Z."/>
            <person name="von Lintig J."/>
            <person name="Webster A.R."/>
            <person name="Le Hir H."/>
            <person name="Stoilov P."/>
            <person name="Amiel J."/>
            <person name="Hardcastle A.J."/>
            <person name="Ayuso C."/>
            <person name="Sui R."/>
            <person name="Chen R."/>
            <person name="Allikmets R."/>
            <person name="Schorderet D.F."/>
        </authorList>
    </citation>
    <scope>DISRUPTION PHENOTYPE</scope>
</reference>
<keyword id="KW-0007">Acetylation</keyword>
<keyword id="KW-0175">Coiled coil</keyword>
<keyword id="KW-0539">Nucleus</keyword>
<keyword id="KW-1185">Reference proteome</keyword>
<gene>
    <name evidence="7" type="primary">Cwc27</name>
    <name type="synonym">Sdccag10</name>
</gene>